<comment type="function">
    <text evidence="1">Catalyzes the reversible conversion of 2-phosphoglycerate (2-PG) into phosphoenolpyruvate (PEP). It is essential for the degradation of carbohydrates via glycolysis.</text>
</comment>
<comment type="catalytic activity">
    <reaction evidence="1">
        <text>(2R)-2-phosphoglycerate = phosphoenolpyruvate + H2O</text>
        <dbReference type="Rhea" id="RHEA:10164"/>
        <dbReference type="ChEBI" id="CHEBI:15377"/>
        <dbReference type="ChEBI" id="CHEBI:58289"/>
        <dbReference type="ChEBI" id="CHEBI:58702"/>
        <dbReference type="EC" id="4.2.1.11"/>
    </reaction>
</comment>
<comment type="cofactor">
    <cofactor evidence="1">
        <name>Mg(2+)</name>
        <dbReference type="ChEBI" id="CHEBI:18420"/>
    </cofactor>
    <text evidence="1">Binds a second Mg(2+) ion via substrate during catalysis.</text>
</comment>
<comment type="pathway">
    <text evidence="1">Carbohydrate degradation; glycolysis; pyruvate from D-glyceraldehyde 3-phosphate: step 4/5.</text>
</comment>
<comment type="subunit">
    <text evidence="1">Component of the RNA degradosome, a multiprotein complex involved in RNA processing and mRNA degradation.</text>
</comment>
<comment type="subcellular location">
    <subcellularLocation>
        <location evidence="1">Cytoplasm</location>
    </subcellularLocation>
    <subcellularLocation>
        <location evidence="1">Secreted</location>
    </subcellularLocation>
    <subcellularLocation>
        <location evidence="1">Cell surface</location>
    </subcellularLocation>
    <text evidence="1">Fractions of enolase are present in both the cytoplasm and on the cell surface.</text>
</comment>
<comment type="similarity">
    <text evidence="1">Belongs to the enolase family.</text>
</comment>
<keyword id="KW-0963">Cytoplasm</keyword>
<keyword id="KW-0324">Glycolysis</keyword>
<keyword id="KW-0456">Lyase</keyword>
<keyword id="KW-0460">Magnesium</keyword>
<keyword id="KW-0479">Metal-binding</keyword>
<keyword id="KW-1185">Reference proteome</keyword>
<keyword id="KW-0964">Secreted</keyword>
<sequence length="431" mass="45943">MAKIINVIGREIMDSRGNPTVEAEVHLDGGFVGMAAAPSGASTGSREALELRDGDKSRYMGKGVLTAVANINGQIRDALMGKDATAQAELDQIMIDLDGTENKDKLGANAILAVSLAAAKAAAAFKGMPLYAHIAELNGTPGQYSMPVPMMNILNGGEHADNNVDIQEFMVQPVGAKSFREALRMGAEIFHNLKKVLQEKGLNTAVGDEGGFAPNLASNADALAVIKVAVEKAGYKLGEDVTLALDCAASEFYKDGQYDLSGEGKVFDSNGFSDFLKSLTEEYPIVSIEDGLDESDWDGWAYQTQILGDKIQLVGDDLFVTNTKILSRGIENKIANSILIKFNQIGSLTETLAAIRMAKDAGYTVVISHRSGETEDATIADLAVATAAGQIKTGSLCRSDRVAKYNQLLRIEEQLGEKAPYKGRSEIKGQA</sequence>
<proteinExistence type="inferred from homology"/>
<gene>
    <name evidence="1" type="primary">eno</name>
    <name type="ordered locus">Shew_1205</name>
</gene>
<feature type="chain" id="PRO_1000019247" description="Enolase">
    <location>
        <begin position="1"/>
        <end position="431"/>
    </location>
</feature>
<feature type="active site" description="Proton donor" evidence="1">
    <location>
        <position position="209"/>
    </location>
</feature>
<feature type="active site" description="Proton acceptor" evidence="1">
    <location>
        <position position="341"/>
    </location>
</feature>
<feature type="binding site" evidence="1">
    <location>
        <position position="167"/>
    </location>
    <ligand>
        <name>(2R)-2-phosphoglycerate</name>
        <dbReference type="ChEBI" id="CHEBI:58289"/>
    </ligand>
</feature>
<feature type="binding site" evidence="1">
    <location>
        <position position="246"/>
    </location>
    <ligand>
        <name>Mg(2+)</name>
        <dbReference type="ChEBI" id="CHEBI:18420"/>
    </ligand>
</feature>
<feature type="binding site" evidence="1">
    <location>
        <position position="289"/>
    </location>
    <ligand>
        <name>Mg(2+)</name>
        <dbReference type="ChEBI" id="CHEBI:18420"/>
    </ligand>
</feature>
<feature type="binding site" evidence="1">
    <location>
        <position position="316"/>
    </location>
    <ligand>
        <name>Mg(2+)</name>
        <dbReference type="ChEBI" id="CHEBI:18420"/>
    </ligand>
</feature>
<feature type="binding site" evidence="1">
    <location>
        <position position="341"/>
    </location>
    <ligand>
        <name>(2R)-2-phosphoglycerate</name>
        <dbReference type="ChEBI" id="CHEBI:58289"/>
    </ligand>
</feature>
<feature type="binding site" evidence="1">
    <location>
        <position position="370"/>
    </location>
    <ligand>
        <name>(2R)-2-phosphoglycerate</name>
        <dbReference type="ChEBI" id="CHEBI:58289"/>
    </ligand>
</feature>
<feature type="binding site" evidence="1">
    <location>
        <position position="371"/>
    </location>
    <ligand>
        <name>(2R)-2-phosphoglycerate</name>
        <dbReference type="ChEBI" id="CHEBI:58289"/>
    </ligand>
</feature>
<feature type="binding site" evidence="1">
    <location>
        <position position="392"/>
    </location>
    <ligand>
        <name>(2R)-2-phosphoglycerate</name>
        <dbReference type="ChEBI" id="CHEBI:58289"/>
    </ligand>
</feature>
<protein>
    <recommendedName>
        <fullName evidence="1">Enolase</fullName>
        <ecNumber evidence="1">4.2.1.11</ecNumber>
    </recommendedName>
    <alternativeName>
        <fullName evidence="1">2-phospho-D-glycerate hydro-lyase</fullName>
    </alternativeName>
    <alternativeName>
        <fullName evidence="1">2-phosphoglycerate dehydratase</fullName>
    </alternativeName>
</protein>
<evidence type="ECO:0000255" key="1">
    <source>
        <dbReference type="HAMAP-Rule" id="MF_00318"/>
    </source>
</evidence>
<accession>A3QC77</accession>
<reference key="1">
    <citation type="submission" date="2007-03" db="EMBL/GenBank/DDBJ databases">
        <title>Complete sequence of Shewanella loihica PV-4.</title>
        <authorList>
            <consortium name="US DOE Joint Genome Institute"/>
            <person name="Copeland A."/>
            <person name="Lucas S."/>
            <person name="Lapidus A."/>
            <person name="Barry K."/>
            <person name="Detter J.C."/>
            <person name="Glavina del Rio T."/>
            <person name="Hammon N."/>
            <person name="Israni S."/>
            <person name="Dalin E."/>
            <person name="Tice H."/>
            <person name="Pitluck S."/>
            <person name="Chain P."/>
            <person name="Malfatti S."/>
            <person name="Shin M."/>
            <person name="Vergez L."/>
            <person name="Schmutz J."/>
            <person name="Larimer F."/>
            <person name="Land M."/>
            <person name="Hauser L."/>
            <person name="Kyrpides N."/>
            <person name="Mikhailova N."/>
            <person name="Romine M.F."/>
            <person name="Serres G."/>
            <person name="Fredrickson J."/>
            <person name="Tiedje J."/>
            <person name="Richardson P."/>
        </authorList>
    </citation>
    <scope>NUCLEOTIDE SEQUENCE [LARGE SCALE GENOMIC DNA]</scope>
    <source>
        <strain>ATCC BAA-1088 / PV-4</strain>
    </source>
</reference>
<dbReference type="EC" id="4.2.1.11" evidence="1"/>
<dbReference type="EMBL" id="CP000606">
    <property type="protein sequence ID" value="ABO23075.1"/>
    <property type="molecule type" value="Genomic_DNA"/>
</dbReference>
<dbReference type="RefSeq" id="WP_011865007.1">
    <property type="nucleotide sequence ID" value="NC_009092.1"/>
</dbReference>
<dbReference type="SMR" id="A3QC77"/>
<dbReference type="STRING" id="323850.Shew_1205"/>
<dbReference type="KEGG" id="slo:Shew_1205"/>
<dbReference type="eggNOG" id="COG0148">
    <property type="taxonomic scope" value="Bacteria"/>
</dbReference>
<dbReference type="HOGENOM" id="CLU_031223_2_1_6"/>
<dbReference type="OrthoDB" id="9804716at2"/>
<dbReference type="UniPathway" id="UPA00109">
    <property type="reaction ID" value="UER00187"/>
</dbReference>
<dbReference type="Proteomes" id="UP000001558">
    <property type="component" value="Chromosome"/>
</dbReference>
<dbReference type="GO" id="GO:0009986">
    <property type="term" value="C:cell surface"/>
    <property type="evidence" value="ECO:0007669"/>
    <property type="project" value="UniProtKB-SubCell"/>
</dbReference>
<dbReference type="GO" id="GO:0005576">
    <property type="term" value="C:extracellular region"/>
    <property type="evidence" value="ECO:0007669"/>
    <property type="project" value="UniProtKB-SubCell"/>
</dbReference>
<dbReference type="GO" id="GO:0000015">
    <property type="term" value="C:phosphopyruvate hydratase complex"/>
    <property type="evidence" value="ECO:0007669"/>
    <property type="project" value="InterPro"/>
</dbReference>
<dbReference type="GO" id="GO:0000287">
    <property type="term" value="F:magnesium ion binding"/>
    <property type="evidence" value="ECO:0007669"/>
    <property type="project" value="UniProtKB-UniRule"/>
</dbReference>
<dbReference type="GO" id="GO:0004634">
    <property type="term" value="F:phosphopyruvate hydratase activity"/>
    <property type="evidence" value="ECO:0007669"/>
    <property type="project" value="UniProtKB-UniRule"/>
</dbReference>
<dbReference type="GO" id="GO:0006096">
    <property type="term" value="P:glycolytic process"/>
    <property type="evidence" value="ECO:0007669"/>
    <property type="project" value="UniProtKB-UniRule"/>
</dbReference>
<dbReference type="CDD" id="cd03313">
    <property type="entry name" value="enolase"/>
    <property type="match status" value="1"/>
</dbReference>
<dbReference type="FunFam" id="3.20.20.120:FF:000001">
    <property type="entry name" value="Enolase"/>
    <property type="match status" value="1"/>
</dbReference>
<dbReference type="FunFam" id="3.30.390.10:FF:000001">
    <property type="entry name" value="Enolase"/>
    <property type="match status" value="1"/>
</dbReference>
<dbReference type="Gene3D" id="3.20.20.120">
    <property type="entry name" value="Enolase-like C-terminal domain"/>
    <property type="match status" value="1"/>
</dbReference>
<dbReference type="Gene3D" id="3.30.390.10">
    <property type="entry name" value="Enolase-like, N-terminal domain"/>
    <property type="match status" value="1"/>
</dbReference>
<dbReference type="HAMAP" id="MF_00318">
    <property type="entry name" value="Enolase"/>
    <property type="match status" value="1"/>
</dbReference>
<dbReference type="InterPro" id="IPR000941">
    <property type="entry name" value="Enolase"/>
</dbReference>
<dbReference type="InterPro" id="IPR036849">
    <property type="entry name" value="Enolase-like_C_sf"/>
</dbReference>
<dbReference type="InterPro" id="IPR029017">
    <property type="entry name" value="Enolase-like_N"/>
</dbReference>
<dbReference type="InterPro" id="IPR020810">
    <property type="entry name" value="Enolase_C"/>
</dbReference>
<dbReference type="InterPro" id="IPR020809">
    <property type="entry name" value="Enolase_CS"/>
</dbReference>
<dbReference type="InterPro" id="IPR020811">
    <property type="entry name" value="Enolase_N"/>
</dbReference>
<dbReference type="NCBIfam" id="TIGR01060">
    <property type="entry name" value="eno"/>
    <property type="match status" value="1"/>
</dbReference>
<dbReference type="PANTHER" id="PTHR11902">
    <property type="entry name" value="ENOLASE"/>
    <property type="match status" value="1"/>
</dbReference>
<dbReference type="PANTHER" id="PTHR11902:SF1">
    <property type="entry name" value="ENOLASE"/>
    <property type="match status" value="1"/>
</dbReference>
<dbReference type="Pfam" id="PF00113">
    <property type="entry name" value="Enolase_C"/>
    <property type="match status" value="1"/>
</dbReference>
<dbReference type="Pfam" id="PF03952">
    <property type="entry name" value="Enolase_N"/>
    <property type="match status" value="1"/>
</dbReference>
<dbReference type="PIRSF" id="PIRSF001400">
    <property type="entry name" value="Enolase"/>
    <property type="match status" value="1"/>
</dbReference>
<dbReference type="PRINTS" id="PR00148">
    <property type="entry name" value="ENOLASE"/>
</dbReference>
<dbReference type="SFLD" id="SFLDF00002">
    <property type="entry name" value="enolase"/>
    <property type="match status" value="1"/>
</dbReference>
<dbReference type="SFLD" id="SFLDG00178">
    <property type="entry name" value="enolase"/>
    <property type="match status" value="1"/>
</dbReference>
<dbReference type="SMART" id="SM01192">
    <property type="entry name" value="Enolase_C"/>
    <property type="match status" value="1"/>
</dbReference>
<dbReference type="SMART" id="SM01193">
    <property type="entry name" value="Enolase_N"/>
    <property type="match status" value="1"/>
</dbReference>
<dbReference type="SUPFAM" id="SSF51604">
    <property type="entry name" value="Enolase C-terminal domain-like"/>
    <property type="match status" value="1"/>
</dbReference>
<dbReference type="SUPFAM" id="SSF54826">
    <property type="entry name" value="Enolase N-terminal domain-like"/>
    <property type="match status" value="1"/>
</dbReference>
<dbReference type="PROSITE" id="PS00164">
    <property type="entry name" value="ENOLASE"/>
    <property type="match status" value="1"/>
</dbReference>
<organism>
    <name type="scientific">Shewanella loihica (strain ATCC BAA-1088 / PV-4)</name>
    <dbReference type="NCBI Taxonomy" id="323850"/>
    <lineage>
        <taxon>Bacteria</taxon>
        <taxon>Pseudomonadati</taxon>
        <taxon>Pseudomonadota</taxon>
        <taxon>Gammaproteobacteria</taxon>
        <taxon>Alteromonadales</taxon>
        <taxon>Shewanellaceae</taxon>
        <taxon>Shewanella</taxon>
    </lineage>
</organism>
<name>ENO_SHELP</name>